<name>MDH_PROVB</name>
<protein>
    <recommendedName>
        <fullName evidence="1">Malate dehydrogenase</fullName>
        <ecNumber evidence="1">1.1.1.37</ecNumber>
    </recommendedName>
</protein>
<organism>
    <name type="scientific">Prosthecochloris vibrioformis</name>
    <name type="common">Chlorobium vibrioforme</name>
    <dbReference type="NCBI Taxonomy" id="1098"/>
    <lineage>
        <taxon>Bacteria</taxon>
        <taxon>Pseudomonadati</taxon>
        <taxon>Chlorobiota</taxon>
        <taxon>Chlorobiia</taxon>
        <taxon>Chlorobiales</taxon>
        <taxon>Chlorobiaceae</taxon>
        <taxon>Prosthecochloris</taxon>
    </lineage>
</organism>
<keyword id="KW-0002">3D-structure</keyword>
<keyword id="KW-0520">NAD</keyword>
<keyword id="KW-0560">Oxidoreductase</keyword>
<keyword id="KW-0816">Tricarboxylic acid cycle</keyword>
<evidence type="ECO:0000255" key="1">
    <source>
        <dbReference type="HAMAP-Rule" id="MF_00487"/>
    </source>
</evidence>
<evidence type="ECO:0000269" key="2">
    <source>
    </source>
</evidence>
<evidence type="ECO:0007829" key="3">
    <source>
        <dbReference type="PDB" id="1GUZ"/>
    </source>
</evidence>
<evidence type="ECO:0007829" key="4">
    <source>
        <dbReference type="PDB" id="1GV1"/>
    </source>
</evidence>
<dbReference type="EC" id="1.1.1.37" evidence="1"/>
<dbReference type="EMBL" id="X80837">
    <property type="protein sequence ID" value="CAA56809.1"/>
    <property type="molecule type" value="Genomic_DNA"/>
</dbReference>
<dbReference type="PDB" id="1GUZ">
    <property type="method" value="X-ray"/>
    <property type="resolution" value="2.00 A"/>
    <property type="chains" value="A/B/C/D=72-310"/>
</dbReference>
<dbReference type="PDB" id="1GV1">
    <property type="method" value="X-ray"/>
    <property type="resolution" value="2.50 A"/>
    <property type="chains" value="A/B/C/D=1-310"/>
</dbReference>
<dbReference type="PDBsum" id="1GUZ"/>
<dbReference type="PDBsum" id="1GV1"/>
<dbReference type="SMR" id="P0C890"/>
<dbReference type="EvolutionaryTrace" id="P0C890"/>
<dbReference type="GO" id="GO:0004459">
    <property type="term" value="F:L-lactate dehydrogenase activity"/>
    <property type="evidence" value="ECO:0007669"/>
    <property type="project" value="TreeGrafter"/>
</dbReference>
<dbReference type="GO" id="GO:0030060">
    <property type="term" value="F:L-malate dehydrogenase (NAD+) activity"/>
    <property type="evidence" value="ECO:0007669"/>
    <property type="project" value="UniProtKB-UniRule"/>
</dbReference>
<dbReference type="GO" id="GO:0006089">
    <property type="term" value="P:lactate metabolic process"/>
    <property type="evidence" value="ECO:0007669"/>
    <property type="project" value="TreeGrafter"/>
</dbReference>
<dbReference type="GO" id="GO:0006099">
    <property type="term" value="P:tricarboxylic acid cycle"/>
    <property type="evidence" value="ECO:0007669"/>
    <property type="project" value="UniProtKB-UniRule"/>
</dbReference>
<dbReference type="CDD" id="cd01339">
    <property type="entry name" value="LDH-like_MDH"/>
    <property type="match status" value="1"/>
</dbReference>
<dbReference type="FunFam" id="3.40.50.720:FF:000018">
    <property type="entry name" value="Malate dehydrogenase"/>
    <property type="match status" value="1"/>
</dbReference>
<dbReference type="FunFam" id="3.90.110.10:FF:000004">
    <property type="entry name" value="Malate dehydrogenase"/>
    <property type="match status" value="1"/>
</dbReference>
<dbReference type="Gene3D" id="3.90.110.10">
    <property type="entry name" value="Lactate dehydrogenase/glycoside hydrolase, family 4, C-terminal"/>
    <property type="match status" value="1"/>
</dbReference>
<dbReference type="Gene3D" id="3.40.50.720">
    <property type="entry name" value="NAD(P)-binding Rossmann-like Domain"/>
    <property type="match status" value="1"/>
</dbReference>
<dbReference type="HAMAP" id="MF_00487">
    <property type="entry name" value="Malate_dehydrog_3"/>
    <property type="match status" value="1"/>
</dbReference>
<dbReference type="InterPro" id="IPR001557">
    <property type="entry name" value="L-lactate/malate_DH"/>
</dbReference>
<dbReference type="InterPro" id="IPR022383">
    <property type="entry name" value="Lactate/malate_DH_C"/>
</dbReference>
<dbReference type="InterPro" id="IPR001236">
    <property type="entry name" value="Lactate/malate_DH_N"/>
</dbReference>
<dbReference type="InterPro" id="IPR015955">
    <property type="entry name" value="Lactate_DH/Glyco_Ohase_4_C"/>
</dbReference>
<dbReference type="InterPro" id="IPR011275">
    <property type="entry name" value="Malate_DH_type3"/>
</dbReference>
<dbReference type="InterPro" id="IPR036291">
    <property type="entry name" value="NAD(P)-bd_dom_sf"/>
</dbReference>
<dbReference type="NCBIfam" id="TIGR01763">
    <property type="entry name" value="MalateDH_bact"/>
    <property type="match status" value="1"/>
</dbReference>
<dbReference type="NCBIfam" id="NF004863">
    <property type="entry name" value="PRK06223.1"/>
    <property type="match status" value="1"/>
</dbReference>
<dbReference type="PANTHER" id="PTHR43128">
    <property type="entry name" value="L-2-HYDROXYCARBOXYLATE DEHYDROGENASE (NAD(P)(+))"/>
    <property type="match status" value="1"/>
</dbReference>
<dbReference type="PANTHER" id="PTHR43128:SF16">
    <property type="entry name" value="L-LACTATE DEHYDROGENASE"/>
    <property type="match status" value="1"/>
</dbReference>
<dbReference type="Pfam" id="PF02866">
    <property type="entry name" value="Ldh_1_C"/>
    <property type="match status" value="1"/>
</dbReference>
<dbReference type="Pfam" id="PF00056">
    <property type="entry name" value="Ldh_1_N"/>
    <property type="match status" value="1"/>
</dbReference>
<dbReference type="PIRSF" id="PIRSF000102">
    <property type="entry name" value="Lac_mal_DH"/>
    <property type="match status" value="1"/>
</dbReference>
<dbReference type="PRINTS" id="PR00086">
    <property type="entry name" value="LLDHDRGNASE"/>
</dbReference>
<dbReference type="SUPFAM" id="SSF56327">
    <property type="entry name" value="LDH C-terminal domain-like"/>
    <property type="match status" value="1"/>
</dbReference>
<dbReference type="SUPFAM" id="SSF51735">
    <property type="entry name" value="NAD(P)-binding Rossmann-fold domains"/>
    <property type="match status" value="1"/>
</dbReference>
<proteinExistence type="evidence at protein level"/>
<gene>
    <name evidence="1" type="primary">mdh</name>
</gene>
<comment type="function">
    <text evidence="1">Catalyzes the reversible oxidation of malate to oxaloacetate.</text>
</comment>
<comment type="catalytic activity">
    <reaction evidence="1">
        <text>(S)-malate + NAD(+) = oxaloacetate + NADH + H(+)</text>
        <dbReference type="Rhea" id="RHEA:21432"/>
        <dbReference type="ChEBI" id="CHEBI:15378"/>
        <dbReference type="ChEBI" id="CHEBI:15589"/>
        <dbReference type="ChEBI" id="CHEBI:16452"/>
        <dbReference type="ChEBI" id="CHEBI:57540"/>
        <dbReference type="ChEBI" id="CHEBI:57945"/>
        <dbReference type="EC" id="1.1.1.37"/>
    </reaction>
</comment>
<comment type="subunit">
    <text evidence="2">Homotetramer; arranged as a dimer of dimers.</text>
</comment>
<comment type="similarity">
    <text evidence="1">Belongs to the LDH/MDH superfamily. MDH type 3 family.</text>
</comment>
<reference key="1">
    <citation type="journal article" date="1996" name="J. Bacteriol.">
        <title>Malate dehydrogenase from the mesophile Chlorobium vibrioforme and from the mild thermophile Chlorobium tepidum: molecular cloning, construction of a hybrid, and expression in Escherichia coli.</title>
        <authorList>
            <person name="Naterstad K."/>
            <person name="Lauvrak V."/>
            <person name="Sirevag R."/>
        </authorList>
    </citation>
    <scope>NUCLEOTIDE SEQUENCE [GENOMIC DNA]</scope>
</reference>
<reference key="2">
    <citation type="journal article" date="2002" name="J. Mol. Biol.">
        <title>Structural basis for thermophilic protein stability: structures of thermophilic and mesophilic malate dehydrogenases.</title>
        <authorList>
            <person name="Dalhus B."/>
            <person name="Saarinen M."/>
            <person name="Sauer U.H."/>
            <person name="Eklund P."/>
            <person name="Johansson K."/>
            <person name="Karlsson A."/>
            <person name="Ramaswamy S."/>
            <person name="Bjoerk A."/>
            <person name="Synstad B."/>
            <person name="Naterstad K."/>
            <person name="Sirevaag R."/>
            <person name="Eklund H."/>
        </authorList>
    </citation>
    <scope>X-RAY CRYSTALLOGRAPHY (2.5 ANGSTROMS)</scope>
    <scope>SUBUNIT</scope>
</reference>
<feature type="chain" id="PRO_0000113449" description="Malate dehydrogenase">
    <location>
        <begin position="1"/>
        <end position="310"/>
    </location>
</feature>
<feature type="active site" description="Proton acceptor" evidence="1">
    <location>
        <position position="174"/>
    </location>
</feature>
<feature type="binding site" evidence="1">
    <location>
        <begin position="7"/>
        <end position="12"/>
    </location>
    <ligand>
        <name>NAD(+)</name>
        <dbReference type="ChEBI" id="CHEBI:57540"/>
    </ligand>
</feature>
<feature type="binding site" evidence="1">
    <location>
        <position position="32"/>
    </location>
    <ligand>
        <name>NAD(+)</name>
        <dbReference type="ChEBI" id="CHEBI:57540"/>
    </ligand>
</feature>
<feature type="binding site" evidence="1">
    <location>
        <position position="81"/>
    </location>
    <ligand>
        <name>substrate</name>
    </ligand>
</feature>
<feature type="binding site" evidence="1">
    <location>
        <position position="87"/>
    </location>
    <ligand>
        <name>substrate</name>
    </ligand>
</feature>
<feature type="binding site" evidence="1">
    <location>
        <position position="94"/>
    </location>
    <ligand>
        <name>NAD(+)</name>
        <dbReference type="ChEBI" id="CHEBI:57540"/>
    </ligand>
</feature>
<feature type="binding site" evidence="1">
    <location>
        <begin position="117"/>
        <end position="119"/>
    </location>
    <ligand>
        <name>NAD(+)</name>
        <dbReference type="ChEBI" id="CHEBI:57540"/>
    </ligand>
</feature>
<feature type="binding site" evidence="1">
    <location>
        <position position="119"/>
    </location>
    <ligand>
        <name>substrate</name>
    </ligand>
</feature>
<feature type="binding site" evidence="1">
    <location>
        <position position="150"/>
    </location>
    <ligand>
        <name>substrate</name>
    </ligand>
</feature>
<feature type="strand" evidence="4">
    <location>
        <begin position="2"/>
        <end position="6"/>
    </location>
</feature>
<feature type="helix" evidence="4">
    <location>
        <begin position="10"/>
        <end position="21"/>
    </location>
</feature>
<feature type="strand" evidence="4">
    <location>
        <begin position="26"/>
        <end position="31"/>
    </location>
</feature>
<feature type="strand" evidence="4">
    <location>
        <begin position="33"/>
        <end position="36"/>
    </location>
</feature>
<feature type="helix" evidence="4">
    <location>
        <begin position="37"/>
        <end position="46"/>
    </location>
</feature>
<feature type="helix" evidence="4">
    <location>
        <begin position="49"/>
        <end position="52"/>
    </location>
</feature>
<feature type="strand" evidence="4">
    <location>
        <begin position="57"/>
        <end position="62"/>
    </location>
</feature>
<feature type="helix" evidence="4">
    <location>
        <begin position="64"/>
        <end position="67"/>
    </location>
</feature>
<feature type="strand" evidence="4">
    <location>
        <begin position="71"/>
        <end position="75"/>
    </location>
</feature>
<feature type="helix" evidence="3">
    <location>
        <begin position="87"/>
        <end position="108"/>
    </location>
</feature>
<feature type="strand" evidence="3">
    <location>
        <begin position="113"/>
        <end position="116"/>
    </location>
</feature>
<feature type="helix" evidence="3">
    <location>
        <begin position="121"/>
        <end position="132"/>
    </location>
</feature>
<feature type="helix" evidence="3">
    <location>
        <begin position="136"/>
        <end position="138"/>
    </location>
</feature>
<feature type="strand" evidence="3">
    <location>
        <begin position="139"/>
        <end position="142"/>
    </location>
</feature>
<feature type="helix" evidence="3">
    <location>
        <begin position="144"/>
        <end position="159"/>
    </location>
</feature>
<feature type="helix" evidence="3">
    <location>
        <begin position="163"/>
        <end position="165"/>
    </location>
</feature>
<feature type="strand" evidence="3">
    <location>
        <begin position="170"/>
        <end position="172"/>
    </location>
</feature>
<feature type="helix" evidence="3">
    <location>
        <begin position="175"/>
        <end position="177"/>
    </location>
</feature>
<feature type="strand" evidence="3">
    <location>
        <begin position="178"/>
        <end position="180"/>
    </location>
</feature>
<feature type="helix" evidence="3">
    <location>
        <begin position="182"/>
        <end position="184"/>
    </location>
</feature>
<feature type="helix" evidence="3">
    <location>
        <begin position="192"/>
        <end position="195"/>
    </location>
</feature>
<feature type="helix" evidence="3">
    <location>
        <begin position="198"/>
        <end position="209"/>
    </location>
</feature>
<feature type="helix" evidence="3">
    <location>
        <begin position="211"/>
        <end position="219"/>
    </location>
</feature>
<feature type="strand" evidence="3">
    <location>
        <begin position="220"/>
        <end position="222"/>
    </location>
</feature>
<feature type="helix" evidence="3">
    <location>
        <begin position="230"/>
        <end position="240"/>
    </location>
</feature>
<feature type="strand" evidence="3">
    <location>
        <begin position="245"/>
        <end position="255"/>
    </location>
</feature>
<feature type="helix" evidence="3">
    <location>
        <begin position="256"/>
        <end position="258"/>
    </location>
</feature>
<feature type="strand" evidence="3">
    <location>
        <begin position="260"/>
        <end position="271"/>
    </location>
</feature>
<feature type="strand" evidence="3">
    <location>
        <begin position="274"/>
        <end position="278"/>
    </location>
</feature>
<feature type="helix" evidence="3">
    <location>
        <begin position="285"/>
        <end position="303"/>
    </location>
</feature>
<sequence length="310" mass="33273">MKITVIGAGNVGATTAFRIADKKLARELVLLDVVEGIPQGKGLDMYETGPVGLFDTKITGSNDYADTADSDIVIITAGLPRKPGMTREDLLMKNAGIVKEVTDNIMKHSKNPIIIVVSNPLDIMTHVAWVRSGLPKERVIGMAGVLDAARFRSFIAMELGVSMQDINACVLGGHGDAMVPVVKYTTVAGIPISDLLPAETIDKLVERTRNGGAEIVEHLKQGSAFYSPGSSVVEMVESIVLDRKRVLPCAVGLEGQYGIDKTFVGVPVKLGRNGVEQIYEINLDQADLDLLQKSAKIVDENCKMLESTIG</sequence>
<accession>P0C890</accession>
<accession>P80038</accession>
<accession>P94687</accession>